<proteinExistence type="inferred from homology"/>
<feature type="chain" id="PRO_1000048208" description="Cytidylate kinase">
    <location>
        <begin position="1"/>
        <end position="216"/>
    </location>
</feature>
<feature type="binding site" evidence="1">
    <location>
        <begin position="7"/>
        <end position="15"/>
    </location>
    <ligand>
        <name>ATP</name>
        <dbReference type="ChEBI" id="CHEBI:30616"/>
    </ligand>
</feature>
<sequence length="216" mass="24002">MIITIDGPSGTGKSTLAKALAQTLQFLYCNTGAMYRTLAYARLQPDWQEVPLEDFLASPPFSFSFSKDSPLQAFYGDHLLTSELSSQEVANFASLFSKEPLVRAYMQTLQKQYATVGNCVFEGRDMGSKVFPHAEVKIFLTAKPEIRAERRLKDLPQGSLSKEALMAELIARDQADQQRECDPLVIPQDATVIDSSDLTISQILEKILPLIPSHLT</sequence>
<comment type="catalytic activity">
    <reaction evidence="1">
        <text>CMP + ATP = CDP + ADP</text>
        <dbReference type="Rhea" id="RHEA:11600"/>
        <dbReference type="ChEBI" id="CHEBI:30616"/>
        <dbReference type="ChEBI" id="CHEBI:58069"/>
        <dbReference type="ChEBI" id="CHEBI:60377"/>
        <dbReference type="ChEBI" id="CHEBI:456216"/>
        <dbReference type="EC" id="2.7.4.25"/>
    </reaction>
</comment>
<comment type="catalytic activity">
    <reaction evidence="1">
        <text>dCMP + ATP = dCDP + ADP</text>
        <dbReference type="Rhea" id="RHEA:25094"/>
        <dbReference type="ChEBI" id="CHEBI:30616"/>
        <dbReference type="ChEBI" id="CHEBI:57566"/>
        <dbReference type="ChEBI" id="CHEBI:58593"/>
        <dbReference type="ChEBI" id="CHEBI:456216"/>
        <dbReference type="EC" id="2.7.4.25"/>
    </reaction>
</comment>
<comment type="subcellular location">
    <subcellularLocation>
        <location evidence="1">Cytoplasm</location>
    </subcellularLocation>
</comment>
<comment type="similarity">
    <text evidence="1">Belongs to the cytidylate kinase family. Type 1 subfamily.</text>
</comment>
<protein>
    <recommendedName>
        <fullName evidence="1">Cytidylate kinase</fullName>
        <shortName evidence="1">CK</shortName>
        <ecNumber evidence="1">2.7.4.25</ecNumber>
    </recommendedName>
    <alternativeName>
        <fullName evidence="1">Cytidine monophosphate kinase</fullName>
        <shortName evidence="1">CMP kinase</shortName>
    </alternativeName>
</protein>
<keyword id="KW-0067">ATP-binding</keyword>
<keyword id="KW-0963">Cytoplasm</keyword>
<keyword id="KW-0418">Kinase</keyword>
<keyword id="KW-0547">Nucleotide-binding</keyword>
<keyword id="KW-0808">Transferase</keyword>
<organism>
    <name type="scientific">Chlamydia trachomatis serovar A (strain ATCC VR-571B / DSM 19440 / HAR-13)</name>
    <dbReference type="NCBI Taxonomy" id="315277"/>
    <lineage>
        <taxon>Bacteria</taxon>
        <taxon>Pseudomonadati</taxon>
        <taxon>Chlamydiota</taxon>
        <taxon>Chlamydiia</taxon>
        <taxon>Chlamydiales</taxon>
        <taxon>Chlamydiaceae</taxon>
        <taxon>Chlamydia/Chlamydophila group</taxon>
        <taxon>Chlamydia</taxon>
    </lineage>
</organism>
<name>KCY_CHLTA</name>
<reference key="1">
    <citation type="journal article" date="2005" name="Infect. Immun.">
        <title>Comparative genomic analysis of Chlamydia trachomatis oculotropic and genitotropic strains.</title>
        <authorList>
            <person name="Carlson J.H."/>
            <person name="Porcella S.F."/>
            <person name="McClarty G."/>
            <person name="Caldwell H.D."/>
        </authorList>
    </citation>
    <scope>NUCLEOTIDE SEQUENCE [LARGE SCALE GENOMIC DNA]</scope>
    <source>
        <strain>ATCC VR-571B / DSM 19440 / HAR-13</strain>
    </source>
</reference>
<evidence type="ECO:0000255" key="1">
    <source>
        <dbReference type="HAMAP-Rule" id="MF_00238"/>
    </source>
</evidence>
<accession>Q3KLP6</accession>
<dbReference type="EC" id="2.7.4.25" evidence="1"/>
<dbReference type="EMBL" id="CP000051">
    <property type="protein sequence ID" value="AAX50726.1"/>
    <property type="molecule type" value="Genomic_DNA"/>
</dbReference>
<dbReference type="RefSeq" id="WP_011324740.1">
    <property type="nucleotide sequence ID" value="NC_007429.1"/>
</dbReference>
<dbReference type="SMR" id="Q3KLP6"/>
<dbReference type="KEGG" id="cta:CTA_0494"/>
<dbReference type="HOGENOM" id="CLU_079959_0_2_0"/>
<dbReference type="Proteomes" id="UP000002532">
    <property type="component" value="Chromosome"/>
</dbReference>
<dbReference type="GO" id="GO:0005737">
    <property type="term" value="C:cytoplasm"/>
    <property type="evidence" value="ECO:0007669"/>
    <property type="project" value="UniProtKB-SubCell"/>
</dbReference>
<dbReference type="GO" id="GO:0005524">
    <property type="term" value="F:ATP binding"/>
    <property type="evidence" value="ECO:0007669"/>
    <property type="project" value="UniProtKB-UniRule"/>
</dbReference>
<dbReference type="GO" id="GO:0036430">
    <property type="term" value="F:CMP kinase activity"/>
    <property type="evidence" value="ECO:0007669"/>
    <property type="project" value="RHEA"/>
</dbReference>
<dbReference type="GO" id="GO:0036431">
    <property type="term" value="F:dCMP kinase activity"/>
    <property type="evidence" value="ECO:0007669"/>
    <property type="project" value="RHEA"/>
</dbReference>
<dbReference type="GO" id="GO:0006220">
    <property type="term" value="P:pyrimidine nucleotide metabolic process"/>
    <property type="evidence" value="ECO:0007669"/>
    <property type="project" value="UniProtKB-UniRule"/>
</dbReference>
<dbReference type="CDD" id="cd02020">
    <property type="entry name" value="CMPK"/>
    <property type="match status" value="1"/>
</dbReference>
<dbReference type="FunFam" id="3.40.50.300:FF:003002">
    <property type="entry name" value="Cytidylate kinase"/>
    <property type="match status" value="1"/>
</dbReference>
<dbReference type="Gene3D" id="3.40.50.300">
    <property type="entry name" value="P-loop containing nucleotide triphosphate hydrolases"/>
    <property type="match status" value="1"/>
</dbReference>
<dbReference type="HAMAP" id="MF_00238">
    <property type="entry name" value="Cytidyl_kinase_type1"/>
    <property type="match status" value="1"/>
</dbReference>
<dbReference type="InterPro" id="IPR003136">
    <property type="entry name" value="Cytidylate_kin"/>
</dbReference>
<dbReference type="InterPro" id="IPR011994">
    <property type="entry name" value="Cytidylate_kinase_dom"/>
</dbReference>
<dbReference type="InterPro" id="IPR027417">
    <property type="entry name" value="P-loop_NTPase"/>
</dbReference>
<dbReference type="NCBIfam" id="TIGR00017">
    <property type="entry name" value="cmk"/>
    <property type="match status" value="1"/>
</dbReference>
<dbReference type="Pfam" id="PF02224">
    <property type="entry name" value="Cytidylate_kin"/>
    <property type="match status" value="1"/>
</dbReference>
<dbReference type="SUPFAM" id="SSF52540">
    <property type="entry name" value="P-loop containing nucleoside triphosphate hydrolases"/>
    <property type="match status" value="1"/>
</dbReference>
<gene>
    <name evidence="1" type="primary">cmk</name>
    <name type="ordered locus">CTA_0494</name>
</gene>